<name>RNH2_DEHM1</name>
<proteinExistence type="inferred from homology"/>
<gene>
    <name evidence="1" type="primary">rnhB</name>
    <name type="ordered locus">DET0780</name>
</gene>
<reference key="1">
    <citation type="journal article" date="2005" name="Science">
        <title>Genome sequence of the PCE-dechlorinating bacterium Dehalococcoides ethenogenes.</title>
        <authorList>
            <person name="Seshadri R."/>
            <person name="Adrian L."/>
            <person name="Fouts D.E."/>
            <person name="Eisen J.A."/>
            <person name="Phillippy A.M."/>
            <person name="Methe B.A."/>
            <person name="Ward N.L."/>
            <person name="Nelson W.C."/>
            <person name="DeBoy R.T."/>
            <person name="Khouri H.M."/>
            <person name="Kolonay J.F."/>
            <person name="Dodson R.J."/>
            <person name="Daugherty S.C."/>
            <person name="Brinkac L.M."/>
            <person name="Sullivan S.A."/>
            <person name="Madupu R."/>
            <person name="Nelson K.E."/>
            <person name="Kang K.H."/>
            <person name="Impraim M."/>
            <person name="Tran K."/>
            <person name="Robinson J.M."/>
            <person name="Forberger H.A."/>
            <person name="Fraser C.M."/>
            <person name="Zinder S.H."/>
            <person name="Heidelberg J.F."/>
        </authorList>
    </citation>
    <scope>NUCLEOTIDE SEQUENCE [LARGE SCALE GENOMIC DNA]</scope>
    <source>
        <strain>ATCC BAA-2266 / KCTC 15142 / 195</strain>
    </source>
</reference>
<sequence length="211" mass="23036">MPAAICPGWAEEKHLWKQGFSSIAGLDEAGRGCLAGPVVAGAVIMPPRLKGDWVAMVRDSKVLTPEKREYLYCHIVSMAISFGVGVVDNTQIDCLGIAPATRLAMKQAVEHLDCRPDFLLVDYLKLPDIPLPQKGIVDGDALCFSIACASIIAKVSRDRLMCELEATYPGYHLAKHKGYGTALHMECISQKGISPIHRRTFAPLKSMFDVI</sequence>
<comment type="function">
    <text evidence="1">Endonuclease that specifically degrades the RNA of RNA-DNA hybrids.</text>
</comment>
<comment type="catalytic activity">
    <reaction evidence="1">
        <text>Endonucleolytic cleavage to 5'-phosphomonoester.</text>
        <dbReference type="EC" id="3.1.26.4"/>
    </reaction>
</comment>
<comment type="cofactor">
    <cofactor evidence="1">
        <name>Mn(2+)</name>
        <dbReference type="ChEBI" id="CHEBI:29035"/>
    </cofactor>
    <cofactor evidence="1">
        <name>Mg(2+)</name>
        <dbReference type="ChEBI" id="CHEBI:18420"/>
    </cofactor>
    <text evidence="1">Manganese or magnesium. Binds 1 divalent metal ion per monomer in the absence of substrate. May bind a second metal ion after substrate binding.</text>
</comment>
<comment type="subcellular location">
    <subcellularLocation>
        <location evidence="1">Cytoplasm</location>
    </subcellularLocation>
</comment>
<comment type="similarity">
    <text evidence="1">Belongs to the RNase HII family.</text>
</comment>
<feature type="chain" id="PRO_0000235716" description="Ribonuclease HII">
    <location>
        <begin position="1"/>
        <end position="211"/>
    </location>
</feature>
<feature type="domain" description="RNase H type-2" evidence="2">
    <location>
        <begin position="21"/>
        <end position="211"/>
    </location>
</feature>
<feature type="binding site" evidence="1">
    <location>
        <position position="27"/>
    </location>
    <ligand>
        <name>a divalent metal cation</name>
        <dbReference type="ChEBI" id="CHEBI:60240"/>
    </ligand>
</feature>
<feature type="binding site" evidence="1">
    <location>
        <position position="28"/>
    </location>
    <ligand>
        <name>a divalent metal cation</name>
        <dbReference type="ChEBI" id="CHEBI:60240"/>
    </ligand>
</feature>
<feature type="binding site" evidence="1">
    <location>
        <position position="122"/>
    </location>
    <ligand>
        <name>a divalent metal cation</name>
        <dbReference type="ChEBI" id="CHEBI:60240"/>
    </ligand>
</feature>
<accession>Q3Z8D7</accession>
<dbReference type="EC" id="3.1.26.4" evidence="1"/>
<dbReference type="EMBL" id="CP000027">
    <property type="protein sequence ID" value="AAW39922.1"/>
    <property type="molecule type" value="Genomic_DNA"/>
</dbReference>
<dbReference type="RefSeq" id="WP_010936513.1">
    <property type="nucleotide sequence ID" value="NC_002936.3"/>
</dbReference>
<dbReference type="SMR" id="Q3Z8D7"/>
<dbReference type="FunCoup" id="Q3Z8D7">
    <property type="interactions" value="327"/>
</dbReference>
<dbReference type="STRING" id="243164.DET0780"/>
<dbReference type="GeneID" id="3229884"/>
<dbReference type="KEGG" id="det:DET0780"/>
<dbReference type="PATRIC" id="fig|243164.10.peg.744"/>
<dbReference type="eggNOG" id="COG0164">
    <property type="taxonomic scope" value="Bacteria"/>
</dbReference>
<dbReference type="HOGENOM" id="CLU_036532_3_2_0"/>
<dbReference type="InParanoid" id="Q3Z8D7"/>
<dbReference type="Proteomes" id="UP000008289">
    <property type="component" value="Chromosome"/>
</dbReference>
<dbReference type="GO" id="GO:0005737">
    <property type="term" value="C:cytoplasm"/>
    <property type="evidence" value="ECO:0007669"/>
    <property type="project" value="UniProtKB-SubCell"/>
</dbReference>
<dbReference type="GO" id="GO:0032299">
    <property type="term" value="C:ribonuclease H2 complex"/>
    <property type="evidence" value="ECO:0007669"/>
    <property type="project" value="TreeGrafter"/>
</dbReference>
<dbReference type="GO" id="GO:0030145">
    <property type="term" value="F:manganese ion binding"/>
    <property type="evidence" value="ECO:0007669"/>
    <property type="project" value="UniProtKB-UniRule"/>
</dbReference>
<dbReference type="GO" id="GO:0003723">
    <property type="term" value="F:RNA binding"/>
    <property type="evidence" value="ECO:0007669"/>
    <property type="project" value="InterPro"/>
</dbReference>
<dbReference type="GO" id="GO:0004523">
    <property type="term" value="F:RNA-DNA hybrid ribonuclease activity"/>
    <property type="evidence" value="ECO:0007669"/>
    <property type="project" value="UniProtKB-UniRule"/>
</dbReference>
<dbReference type="GO" id="GO:0043137">
    <property type="term" value="P:DNA replication, removal of RNA primer"/>
    <property type="evidence" value="ECO:0007669"/>
    <property type="project" value="TreeGrafter"/>
</dbReference>
<dbReference type="GO" id="GO:0006298">
    <property type="term" value="P:mismatch repair"/>
    <property type="evidence" value="ECO:0007669"/>
    <property type="project" value="TreeGrafter"/>
</dbReference>
<dbReference type="CDD" id="cd07182">
    <property type="entry name" value="RNase_HII_bacteria_HII_like"/>
    <property type="match status" value="1"/>
</dbReference>
<dbReference type="Gene3D" id="3.30.420.10">
    <property type="entry name" value="Ribonuclease H-like superfamily/Ribonuclease H"/>
    <property type="match status" value="1"/>
</dbReference>
<dbReference type="HAMAP" id="MF_00052_B">
    <property type="entry name" value="RNase_HII_B"/>
    <property type="match status" value="1"/>
</dbReference>
<dbReference type="InterPro" id="IPR022898">
    <property type="entry name" value="RNase_HII"/>
</dbReference>
<dbReference type="InterPro" id="IPR001352">
    <property type="entry name" value="RNase_HII/HIII"/>
</dbReference>
<dbReference type="InterPro" id="IPR024567">
    <property type="entry name" value="RNase_HII/HIII_dom"/>
</dbReference>
<dbReference type="InterPro" id="IPR012337">
    <property type="entry name" value="RNaseH-like_sf"/>
</dbReference>
<dbReference type="InterPro" id="IPR036397">
    <property type="entry name" value="RNaseH_sf"/>
</dbReference>
<dbReference type="NCBIfam" id="NF000595">
    <property type="entry name" value="PRK00015.1-3"/>
    <property type="match status" value="1"/>
</dbReference>
<dbReference type="PANTHER" id="PTHR10954">
    <property type="entry name" value="RIBONUCLEASE H2 SUBUNIT A"/>
    <property type="match status" value="1"/>
</dbReference>
<dbReference type="PANTHER" id="PTHR10954:SF18">
    <property type="entry name" value="RIBONUCLEASE HII"/>
    <property type="match status" value="1"/>
</dbReference>
<dbReference type="Pfam" id="PF01351">
    <property type="entry name" value="RNase_HII"/>
    <property type="match status" value="1"/>
</dbReference>
<dbReference type="SUPFAM" id="SSF53098">
    <property type="entry name" value="Ribonuclease H-like"/>
    <property type="match status" value="1"/>
</dbReference>
<dbReference type="PROSITE" id="PS51975">
    <property type="entry name" value="RNASE_H_2"/>
    <property type="match status" value="1"/>
</dbReference>
<evidence type="ECO:0000255" key="1">
    <source>
        <dbReference type="HAMAP-Rule" id="MF_00052"/>
    </source>
</evidence>
<evidence type="ECO:0000255" key="2">
    <source>
        <dbReference type="PROSITE-ProRule" id="PRU01319"/>
    </source>
</evidence>
<organism>
    <name type="scientific">Dehalococcoides mccartyi (strain ATCC BAA-2266 / KCTC 15142 / 195)</name>
    <name type="common">Dehalococcoides ethenogenes (strain 195)</name>
    <dbReference type="NCBI Taxonomy" id="243164"/>
    <lineage>
        <taxon>Bacteria</taxon>
        <taxon>Bacillati</taxon>
        <taxon>Chloroflexota</taxon>
        <taxon>Dehalococcoidia</taxon>
        <taxon>Dehalococcoidales</taxon>
        <taxon>Dehalococcoidaceae</taxon>
        <taxon>Dehalococcoides</taxon>
    </lineage>
</organism>
<keyword id="KW-0963">Cytoplasm</keyword>
<keyword id="KW-0255">Endonuclease</keyword>
<keyword id="KW-0378">Hydrolase</keyword>
<keyword id="KW-0464">Manganese</keyword>
<keyword id="KW-0479">Metal-binding</keyword>
<keyword id="KW-0540">Nuclease</keyword>
<protein>
    <recommendedName>
        <fullName evidence="1">Ribonuclease HII</fullName>
        <shortName evidence="1">RNase HII</shortName>
        <ecNumber evidence="1">3.1.26.4</ecNumber>
    </recommendedName>
</protein>